<feature type="chain" id="PRO_0000272612" description="Chromatin modification-related protein MEAF6">
    <location>
        <begin position="1"/>
        <end position="192"/>
    </location>
</feature>
<feature type="region of interest" description="Disordered" evidence="3">
    <location>
        <begin position="106"/>
        <end position="192"/>
    </location>
</feature>
<feature type="coiled-coil region" evidence="2">
    <location>
        <begin position="11"/>
        <end position="45"/>
    </location>
</feature>
<feature type="compositionally biased region" description="Polar residues" evidence="3">
    <location>
        <begin position="119"/>
        <end position="134"/>
    </location>
</feature>
<feature type="compositionally biased region" description="Acidic residues" evidence="3">
    <location>
        <begin position="135"/>
        <end position="144"/>
    </location>
</feature>
<feature type="compositionally biased region" description="Basic residues" evidence="3">
    <location>
        <begin position="164"/>
        <end position="176"/>
    </location>
</feature>
<feature type="compositionally biased region" description="Basic and acidic residues" evidence="3">
    <location>
        <begin position="177"/>
        <end position="192"/>
    </location>
</feature>
<protein>
    <recommendedName>
        <fullName>Chromatin modification-related protein MEAF6</fullName>
        <shortName>MYST/Esa1-associated factor 6</shortName>
    </recommendedName>
    <alternativeName>
        <fullName>Esa1-associated factor 6 homolog</fullName>
        <shortName>Protein EAF6 homolog</shortName>
    </alternativeName>
</protein>
<sequence length="192" mass="21838">MAMHAKATPPQIPDTRRELSELVKRKQELAETLVNLERQIYAFEGSYLEDTQMYGNIIRGWDRYLTNQKNSNSKTDRRNRKFKEAERLFSKSSVTSVAAVCALGGIPDHMNEKREPGSGTESDTSPDLQNQENEPSQEDTEEADGALQDLKPQKAASTSSGSHHSSHKKRKNKNRHRFDMKMNKKPRADYSA</sequence>
<name>EAF6_DANRE</name>
<proteinExistence type="evidence at transcript level"/>
<evidence type="ECO:0000250" key="1">
    <source>
        <dbReference type="UniProtKB" id="Q9HAF1"/>
    </source>
</evidence>
<evidence type="ECO:0000255" key="2"/>
<evidence type="ECO:0000256" key="3">
    <source>
        <dbReference type="SAM" id="MobiDB-lite"/>
    </source>
</evidence>
<evidence type="ECO:0000305" key="4"/>
<accession>Q6AZD3</accession>
<keyword id="KW-0010">Activator</keyword>
<keyword id="KW-0137">Centromere</keyword>
<keyword id="KW-0156">Chromatin regulator</keyword>
<keyword id="KW-0158">Chromosome</keyword>
<keyword id="KW-0175">Coiled coil</keyword>
<keyword id="KW-0995">Kinetochore</keyword>
<keyword id="KW-0539">Nucleus</keyword>
<keyword id="KW-1185">Reference proteome</keyword>
<keyword id="KW-0804">Transcription</keyword>
<keyword id="KW-0805">Transcription regulation</keyword>
<reference key="1">
    <citation type="submission" date="2004-07" db="EMBL/GenBank/DDBJ databases">
        <authorList>
            <consortium name="NIH - Zebrafish Gene Collection (ZGC) project"/>
        </authorList>
    </citation>
    <scope>NUCLEOTIDE SEQUENCE [LARGE SCALE MRNA]</scope>
    <source>
        <tissue>Embryo</tissue>
    </source>
</reference>
<comment type="function">
    <text evidence="1">Component of the NuA4 histone acetyltransferase complex which is involved in transcriptional activation of select genes principally by acetylation of nucleosomal histone H4 and H2A. This modification may both alter nucleosome - DNA interactions and promote interaction of the modified histones with other proteins which positively regulate transcription. Component of HBO1 complexes, which specifically mediate acetylation of histone H3 at 'Lys-14' (H3K14ac), and have reduced activity toward histone H4. Component of the MOZ/MORF complex which has a histone H3 acetyltransferase activity (By similarity).</text>
</comment>
<comment type="subunit">
    <text evidence="1">Component of the NuA4 histone acetyltransferase complex. Component of the hbo1 complex. Component of the moz/morf complex (By similarity).</text>
</comment>
<comment type="subcellular location">
    <subcellularLocation>
        <location evidence="1">Nucleus</location>
        <location evidence="1">Nucleolus</location>
    </subcellularLocation>
    <subcellularLocation>
        <location evidence="1">Chromosome</location>
        <location evidence="1">Centromere</location>
        <location evidence="1">Kinetochore</location>
    </subcellularLocation>
</comment>
<comment type="similarity">
    <text evidence="4">Belongs to the EAF6 family.</text>
</comment>
<dbReference type="EMBL" id="BC078210">
    <property type="protein sequence ID" value="AAH78210.1"/>
    <property type="molecule type" value="mRNA"/>
</dbReference>
<dbReference type="RefSeq" id="NP_001003756.1">
    <property type="nucleotide sequence ID" value="NM_001003756.1"/>
</dbReference>
<dbReference type="SMR" id="Q6AZD3"/>
<dbReference type="FunCoup" id="Q6AZD3">
    <property type="interactions" value="720"/>
</dbReference>
<dbReference type="STRING" id="7955.ENSDARP00000132726"/>
<dbReference type="PaxDb" id="7955-ENSDARP00000100426"/>
<dbReference type="Ensembl" id="ENSDART00000159215">
    <property type="protein sequence ID" value="ENSDARP00000132726"/>
    <property type="gene ID" value="ENSDARG00000101216"/>
</dbReference>
<dbReference type="GeneID" id="445300"/>
<dbReference type="KEGG" id="dre:445300"/>
<dbReference type="AGR" id="ZFIN:ZDB-GENE-040808-12"/>
<dbReference type="CTD" id="64769"/>
<dbReference type="ZFIN" id="ZDB-GENE-040808-12">
    <property type="gene designation" value="meaf6"/>
</dbReference>
<dbReference type="eggNOG" id="KOG3856">
    <property type="taxonomic scope" value="Eukaryota"/>
</dbReference>
<dbReference type="InParanoid" id="Q6AZD3"/>
<dbReference type="OrthoDB" id="440324at2759"/>
<dbReference type="PhylomeDB" id="Q6AZD3"/>
<dbReference type="TreeFam" id="TF324130"/>
<dbReference type="Reactome" id="R-DRE-6804758">
    <property type="pathway name" value="Regulation of TP53 Activity through Acetylation"/>
</dbReference>
<dbReference type="PRO" id="PR:Q6AZD3"/>
<dbReference type="Proteomes" id="UP000000437">
    <property type="component" value="Chromosome 19"/>
</dbReference>
<dbReference type="Bgee" id="ENSDARG00000101216">
    <property type="expression patterns" value="Expressed in mature ovarian follicle and 28 other cell types or tissues"/>
</dbReference>
<dbReference type="ExpressionAtlas" id="Q6AZD3">
    <property type="expression patterns" value="baseline"/>
</dbReference>
<dbReference type="GO" id="GO:0000776">
    <property type="term" value="C:kinetochore"/>
    <property type="evidence" value="ECO:0000250"/>
    <property type="project" value="UniProtKB"/>
</dbReference>
<dbReference type="GO" id="GO:0070776">
    <property type="term" value="C:MOZ/MORF histone acetyltransferase complex"/>
    <property type="evidence" value="ECO:0000250"/>
    <property type="project" value="UniProtKB"/>
</dbReference>
<dbReference type="GO" id="GO:0035267">
    <property type="term" value="C:NuA4 histone acetyltransferase complex"/>
    <property type="evidence" value="ECO:0000250"/>
    <property type="project" value="UniProtKB"/>
</dbReference>
<dbReference type="GO" id="GO:0005730">
    <property type="term" value="C:nucleolus"/>
    <property type="evidence" value="ECO:0000250"/>
    <property type="project" value="UniProtKB"/>
</dbReference>
<dbReference type="GO" id="GO:0006338">
    <property type="term" value="P:chromatin remodeling"/>
    <property type="evidence" value="ECO:0007669"/>
    <property type="project" value="GOC"/>
</dbReference>
<dbReference type="InterPro" id="IPR015418">
    <property type="entry name" value="Eaf6"/>
</dbReference>
<dbReference type="PANTHER" id="PTHR13476">
    <property type="entry name" value="CHROMATIN MODIFICATION-RELATED PROTEIN MEAF6"/>
    <property type="match status" value="1"/>
</dbReference>
<dbReference type="Pfam" id="PF09340">
    <property type="entry name" value="NuA4"/>
    <property type="match status" value="1"/>
</dbReference>
<gene>
    <name type="primary">meaf6</name>
    <name type="ORF">zgc:100869</name>
</gene>
<organism>
    <name type="scientific">Danio rerio</name>
    <name type="common">Zebrafish</name>
    <name type="synonym">Brachydanio rerio</name>
    <dbReference type="NCBI Taxonomy" id="7955"/>
    <lineage>
        <taxon>Eukaryota</taxon>
        <taxon>Metazoa</taxon>
        <taxon>Chordata</taxon>
        <taxon>Craniata</taxon>
        <taxon>Vertebrata</taxon>
        <taxon>Euteleostomi</taxon>
        <taxon>Actinopterygii</taxon>
        <taxon>Neopterygii</taxon>
        <taxon>Teleostei</taxon>
        <taxon>Ostariophysi</taxon>
        <taxon>Cypriniformes</taxon>
        <taxon>Danionidae</taxon>
        <taxon>Danioninae</taxon>
        <taxon>Danio</taxon>
    </lineage>
</organism>